<comment type="function">
    <text evidence="1">Catalytic component of the RNA exosome complex which has 3'-&gt;5' exoribonuclease activity and participates in a multitude of cellular RNA processing and degradation events.</text>
</comment>
<comment type="catalytic activity">
    <reaction evidence="1">
        <text>Exonucleolytic cleavage in the 3'- to 5'-direction to yield nucleoside 5'-phosphates.</text>
        <dbReference type="EC" id="3.1.13.1"/>
    </reaction>
</comment>
<comment type="cofactor">
    <cofactor evidence="1">
        <name>Mg(2+)</name>
        <dbReference type="ChEBI" id="CHEBI:18420"/>
    </cofactor>
</comment>
<comment type="subunit">
    <text evidence="1">Component of the RNA exosome complex.</text>
</comment>
<comment type="subcellular location">
    <subcellularLocation>
        <location evidence="1">Cytoplasm</location>
    </subcellularLocation>
</comment>
<comment type="similarity">
    <text evidence="3">Belongs to the RNR ribonuclease family.</text>
</comment>
<comment type="sequence caution" evidence="3">
    <conflict type="erroneous initiation">
        <sequence resource="EMBL-CDS" id="AAH73711"/>
    </conflict>
    <text>Truncated N-terminus.</text>
</comment>
<protein>
    <recommendedName>
        <fullName>DIS3-like exonuclease 1</fullName>
        <ecNumber evidence="1">3.1.13.1</ecNumber>
    </recommendedName>
</protein>
<organism>
    <name type="scientific">Xenopus laevis</name>
    <name type="common">African clawed frog</name>
    <dbReference type="NCBI Taxonomy" id="8355"/>
    <lineage>
        <taxon>Eukaryota</taxon>
        <taxon>Metazoa</taxon>
        <taxon>Chordata</taxon>
        <taxon>Craniata</taxon>
        <taxon>Vertebrata</taxon>
        <taxon>Euteleostomi</taxon>
        <taxon>Amphibia</taxon>
        <taxon>Batrachia</taxon>
        <taxon>Anura</taxon>
        <taxon>Pipoidea</taxon>
        <taxon>Pipidae</taxon>
        <taxon>Xenopodinae</taxon>
        <taxon>Xenopus</taxon>
        <taxon>Xenopus</taxon>
    </lineage>
</organism>
<keyword id="KW-0963">Cytoplasm</keyword>
<keyword id="KW-0269">Exonuclease</keyword>
<keyword id="KW-0271">Exosome</keyword>
<keyword id="KW-0378">Hydrolase</keyword>
<keyword id="KW-0460">Magnesium</keyword>
<keyword id="KW-0540">Nuclease</keyword>
<keyword id="KW-1185">Reference proteome</keyword>
<keyword id="KW-0694">RNA-binding</keyword>
<feature type="chain" id="PRO_0000314815" description="DIS3-like exonuclease 1">
    <location>
        <begin position="1"/>
        <end position="1040"/>
    </location>
</feature>
<feature type="domain" description="CSD1" evidence="2">
    <location>
        <begin position="232"/>
        <end position="310"/>
    </location>
</feature>
<feature type="domain" description="CSD2" evidence="2">
    <location>
        <begin position="360"/>
        <end position="426"/>
    </location>
</feature>
<feature type="domain" description="RNB" evidence="2">
    <location>
        <begin position="459"/>
        <end position="808"/>
    </location>
</feature>
<reference key="1">
    <citation type="submission" date="2004-06" db="EMBL/GenBank/DDBJ databases">
        <authorList>
            <consortium name="NIH - Xenopus Gene Collection (XGC) project"/>
        </authorList>
    </citation>
    <scope>NUCLEOTIDE SEQUENCE [LARGE SCALE MRNA]</scope>
    <source>
        <tissue>Oocyte</tissue>
    </source>
</reference>
<evidence type="ECO:0000250" key="1">
    <source>
        <dbReference type="UniProtKB" id="Q8TF46"/>
    </source>
</evidence>
<evidence type="ECO:0000255" key="2"/>
<evidence type="ECO:0000305" key="3"/>
<proteinExistence type="evidence at transcript level"/>
<gene>
    <name type="primary">dis3l</name>
</gene>
<sequence length="1040" mass="119167">MLKTEKILHLKTQRGRSVRAVREHYLREDVRCGSALCHTCPRDGKLLSEELTHYVVPDCQVLQDYQEVLEFPELRGIIIMQTACQAVQHQRGRRQYKKLCSLLRDTRHDCILFSNEFQNHAYLPREMGESALAWQTRCIYNSCVWYYQHCQKKIPVVMVTEDESVIGKYNTETQEVYVVSFQIYLETFWPNFKGALELYKSLRDTHLERKLESRESNGKEYPEHLPLEILEAGIKSGRYKQGVLSVNKHRAQLESFVRLQGLGGKETDIQSDIFIHGTKPRNRAIHGDLVAVELLPKSEWKGRTGALCENETDEKVGDMQAEVMPTGRVVGIMQRNWRDYVVTFPAKEDTETQGKNTQKVLVMPWDYRIPKIRISTQQAEALQNYRVVVRIDSWESNSLYPNGHFVRALGRAGNLEAEIATILVENSISLNPFSEAQLAEMPSNTHENPWQVKPEEGDRLDLRETHLVFSIDPKGCEDVDDALSIRVLPSGDLELGVHIADVTHFVQHNTYTDIEARSRATTYYLADRRNDMLPLILSADLCSLLGAVDRYAVSVIWEMDCSTYEIRRVWYGRTIIRSSYKLSYEVAQQLLDGDLEPLSTEKELHPLKQDPARLQQLLWAVGKMTEVAHATRMRRNMSGALELEGVEVRVQLGEKHSIDDLVPKQPLQVHETIAECMILANHWVAKKIWESYPQHALLRLHPPPRQEFFQELKECAKARGFSIDTRSNKALADSLDQAHDPSDPLVNQLLRMMATQAMSNARYFSTGSYTEDEFYHYGLALEKYTHFTSPIRRYADIVVHRLLLAAVNKGPKDHLLGNKDLEELCRHINARNRAAQQCQKQSTELFQCMFFKDKDPDSDQRCISDAVIYGIRTNGVLLFIPRYGIKGAAYLKNTDGLVLACEEDGQCRWVHGSLQRLPAQIVVTTQEAKSFSFCLFDHVTVRIRIQSSRFHPDSIRLEIISNRPNPSQEALPSASNPQLLRTELVKEVTRTAVEAQLAVEGAAELKPVERYQEYRQTQGQSLYTMLEELWDLALLDVSGA</sequence>
<name>DI3L1_XENLA</name>
<dbReference type="EC" id="3.1.13.1" evidence="1"/>
<dbReference type="EMBL" id="BC073711">
    <property type="protein sequence ID" value="AAH73711.1"/>
    <property type="status" value="ALT_INIT"/>
    <property type="molecule type" value="mRNA"/>
</dbReference>
<dbReference type="RefSeq" id="NP_001086021.1">
    <property type="nucleotide sequence ID" value="NM_001092552.1"/>
</dbReference>
<dbReference type="SMR" id="Q6GN11"/>
<dbReference type="DNASU" id="444450"/>
<dbReference type="GeneID" id="444450"/>
<dbReference type="KEGG" id="xla:444450"/>
<dbReference type="AGR" id="Xenbase:XB-GENE-1013183"/>
<dbReference type="CTD" id="444450"/>
<dbReference type="Xenbase" id="XB-GENE-1013183">
    <property type="gene designation" value="dis3l.L"/>
</dbReference>
<dbReference type="OrthoDB" id="372421at2759"/>
<dbReference type="Proteomes" id="UP000186698">
    <property type="component" value="Chromosome 3L"/>
</dbReference>
<dbReference type="Bgee" id="444450">
    <property type="expression patterns" value="Expressed in blastula and 19 other cell types or tissues"/>
</dbReference>
<dbReference type="GO" id="GO:0000177">
    <property type="term" value="C:cytoplasmic exosome (RNase complex)"/>
    <property type="evidence" value="ECO:0000250"/>
    <property type="project" value="UniProtKB"/>
</dbReference>
<dbReference type="GO" id="GO:0000175">
    <property type="term" value="F:3'-5'-RNA exonuclease activity"/>
    <property type="evidence" value="ECO:0000250"/>
    <property type="project" value="UniProtKB"/>
</dbReference>
<dbReference type="GO" id="GO:0008859">
    <property type="term" value="F:exoribonuclease II activity"/>
    <property type="evidence" value="ECO:0000250"/>
    <property type="project" value="UniProtKB"/>
</dbReference>
<dbReference type="GO" id="GO:0003723">
    <property type="term" value="F:RNA binding"/>
    <property type="evidence" value="ECO:0007669"/>
    <property type="project" value="UniProtKB-KW"/>
</dbReference>
<dbReference type="GO" id="GO:0006402">
    <property type="term" value="P:mRNA catabolic process"/>
    <property type="evidence" value="ECO:0000318"/>
    <property type="project" value="GO_Central"/>
</dbReference>
<dbReference type="GO" id="GO:0016075">
    <property type="term" value="P:rRNA catabolic process"/>
    <property type="evidence" value="ECO:0000318"/>
    <property type="project" value="GO_Central"/>
</dbReference>
<dbReference type="CDD" id="cd09862">
    <property type="entry name" value="PIN_Rrp44-like"/>
    <property type="match status" value="1"/>
</dbReference>
<dbReference type="FunFam" id="2.40.50.140:FF:000143">
    <property type="entry name" value="DIS3-like exonuclease 1 isoform X1"/>
    <property type="match status" value="1"/>
</dbReference>
<dbReference type="FunFam" id="2.40.50.690:FF:000004">
    <property type="entry name" value="DIS3-like exonuclease 1 isoform X1"/>
    <property type="match status" value="1"/>
</dbReference>
<dbReference type="FunFam" id="3.40.50.1010:FF:000021">
    <property type="entry name" value="DIS3-like exonuclease 1 isoform X1"/>
    <property type="match status" value="1"/>
</dbReference>
<dbReference type="FunFam" id="2.40.50.700:FF:000004">
    <property type="entry name" value="Exosome complex exonuclease RRP44 homolog A"/>
    <property type="match status" value="1"/>
</dbReference>
<dbReference type="Gene3D" id="2.40.50.690">
    <property type="match status" value="1"/>
</dbReference>
<dbReference type="Gene3D" id="2.40.50.700">
    <property type="match status" value="1"/>
</dbReference>
<dbReference type="Gene3D" id="3.40.50.1010">
    <property type="entry name" value="5'-nuclease"/>
    <property type="match status" value="1"/>
</dbReference>
<dbReference type="Gene3D" id="2.40.50.140">
    <property type="entry name" value="Nucleic acid-binding proteins"/>
    <property type="match status" value="1"/>
</dbReference>
<dbReference type="InterPro" id="IPR041505">
    <property type="entry name" value="Dis3_CSD2"/>
</dbReference>
<dbReference type="InterPro" id="IPR012340">
    <property type="entry name" value="NA-bd_OB-fold"/>
</dbReference>
<dbReference type="InterPro" id="IPR001900">
    <property type="entry name" value="RNase_II/R"/>
</dbReference>
<dbReference type="InterPro" id="IPR022966">
    <property type="entry name" value="RNase_II/R_CS"/>
</dbReference>
<dbReference type="InterPro" id="IPR050180">
    <property type="entry name" value="RNR_Ribonuclease"/>
</dbReference>
<dbReference type="InterPro" id="IPR033771">
    <property type="entry name" value="Rrp44_CSD1"/>
</dbReference>
<dbReference type="PANTHER" id="PTHR23355:SF30">
    <property type="entry name" value="DIS3-LIKE EXONUCLEASE 1"/>
    <property type="match status" value="1"/>
</dbReference>
<dbReference type="PANTHER" id="PTHR23355">
    <property type="entry name" value="RIBONUCLEASE"/>
    <property type="match status" value="1"/>
</dbReference>
<dbReference type="Pfam" id="PF17849">
    <property type="entry name" value="OB_Dis3"/>
    <property type="match status" value="1"/>
</dbReference>
<dbReference type="Pfam" id="PF00773">
    <property type="entry name" value="RNB"/>
    <property type="match status" value="1"/>
</dbReference>
<dbReference type="Pfam" id="PF17216">
    <property type="entry name" value="Rrp44_CSD1"/>
    <property type="match status" value="1"/>
</dbReference>
<dbReference type="SMART" id="SM00955">
    <property type="entry name" value="RNB"/>
    <property type="match status" value="1"/>
</dbReference>
<dbReference type="SUPFAM" id="SSF50249">
    <property type="entry name" value="Nucleic acid-binding proteins"/>
    <property type="match status" value="3"/>
</dbReference>
<dbReference type="PROSITE" id="PS01175">
    <property type="entry name" value="RIBONUCLEASE_II"/>
    <property type="match status" value="1"/>
</dbReference>
<accession>Q6GN11</accession>